<gene>
    <name evidence="1" type="primary">rsgA</name>
    <name type="ordered locus">BVU_1866</name>
</gene>
<feature type="chain" id="PRO_1000188035" description="Small ribosomal subunit biogenesis GTPase RsgA">
    <location>
        <begin position="1"/>
        <end position="310"/>
    </location>
</feature>
<feature type="domain" description="CP-type G" evidence="2">
    <location>
        <begin position="77"/>
        <end position="238"/>
    </location>
</feature>
<feature type="binding site" evidence="1">
    <location>
        <begin position="126"/>
        <end position="129"/>
    </location>
    <ligand>
        <name>GTP</name>
        <dbReference type="ChEBI" id="CHEBI:37565"/>
    </ligand>
</feature>
<feature type="binding site" evidence="1">
    <location>
        <begin position="180"/>
        <end position="188"/>
    </location>
    <ligand>
        <name>GTP</name>
        <dbReference type="ChEBI" id="CHEBI:37565"/>
    </ligand>
</feature>
<feature type="binding site" evidence="1">
    <location>
        <position position="262"/>
    </location>
    <ligand>
        <name>Zn(2+)</name>
        <dbReference type="ChEBI" id="CHEBI:29105"/>
    </ligand>
</feature>
<feature type="binding site" evidence="1">
    <location>
        <position position="267"/>
    </location>
    <ligand>
        <name>Zn(2+)</name>
        <dbReference type="ChEBI" id="CHEBI:29105"/>
    </ligand>
</feature>
<feature type="binding site" evidence="1">
    <location>
        <position position="269"/>
    </location>
    <ligand>
        <name>Zn(2+)</name>
        <dbReference type="ChEBI" id="CHEBI:29105"/>
    </ligand>
</feature>
<feature type="binding site" evidence="1">
    <location>
        <position position="275"/>
    </location>
    <ligand>
        <name>Zn(2+)</name>
        <dbReference type="ChEBI" id="CHEBI:29105"/>
    </ligand>
</feature>
<dbReference type="EC" id="3.6.1.-" evidence="1"/>
<dbReference type="EMBL" id="CP000139">
    <property type="protein sequence ID" value="ABR39541.1"/>
    <property type="molecule type" value="Genomic_DNA"/>
</dbReference>
<dbReference type="RefSeq" id="WP_005839841.1">
    <property type="nucleotide sequence ID" value="NZ_JANSWM010000118.1"/>
</dbReference>
<dbReference type="SMR" id="A6L1H7"/>
<dbReference type="STRING" id="435590.BVU_1866"/>
<dbReference type="PaxDb" id="435590-BVU_1866"/>
<dbReference type="GeneID" id="5302832"/>
<dbReference type="KEGG" id="bvu:BVU_1866"/>
<dbReference type="eggNOG" id="COG1162">
    <property type="taxonomic scope" value="Bacteria"/>
</dbReference>
<dbReference type="HOGENOM" id="CLU_033617_2_0_10"/>
<dbReference type="BioCyc" id="BVUL435590:G1G59-1955-MONOMER"/>
<dbReference type="Proteomes" id="UP000002861">
    <property type="component" value="Chromosome"/>
</dbReference>
<dbReference type="GO" id="GO:0005737">
    <property type="term" value="C:cytoplasm"/>
    <property type="evidence" value="ECO:0007669"/>
    <property type="project" value="UniProtKB-SubCell"/>
</dbReference>
<dbReference type="GO" id="GO:0005525">
    <property type="term" value="F:GTP binding"/>
    <property type="evidence" value="ECO:0007669"/>
    <property type="project" value="UniProtKB-UniRule"/>
</dbReference>
<dbReference type="GO" id="GO:0003924">
    <property type="term" value="F:GTPase activity"/>
    <property type="evidence" value="ECO:0007669"/>
    <property type="project" value="UniProtKB-UniRule"/>
</dbReference>
<dbReference type="GO" id="GO:0046872">
    <property type="term" value="F:metal ion binding"/>
    <property type="evidence" value="ECO:0007669"/>
    <property type="project" value="UniProtKB-KW"/>
</dbReference>
<dbReference type="GO" id="GO:0019843">
    <property type="term" value="F:rRNA binding"/>
    <property type="evidence" value="ECO:0007669"/>
    <property type="project" value="UniProtKB-KW"/>
</dbReference>
<dbReference type="GO" id="GO:0042274">
    <property type="term" value="P:ribosomal small subunit biogenesis"/>
    <property type="evidence" value="ECO:0007669"/>
    <property type="project" value="UniProtKB-UniRule"/>
</dbReference>
<dbReference type="CDD" id="cd04466">
    <property type="entry name" value="S1_YloQ_GTPase"/>
    <property type="match status" value="1"/>
</dbReference>
<dbReference type="CDD" id="cd01854">
    <property type="entry name" value="YjeQ_EngC"/>
    <property type="match status" value="1"/>
</dbReference>
<dbReference type="Gene3D" id="2.40.50.140">
    <property type="entry name" value="Nucleic acid-binding proteins"/>
    <property type="match status" value="1"/>
</dbReference>
<dbReference type="Gene3D" id="3.40.50.300">
    <property type="entry name" value="P-loop containing nucleotide triphosphate hydrolases"/>
    <property type="match status" value="1"/>
</dbReference>
<dbReference type="Gene3D" id="1.10.40.50">
    <property type="entry name" value="Probable gtpase engc, domain 3"/>
    <property type="match status" value="1"/>
</dbReference>
<dbReference type="HAMAP" id="MF_01820">
    <property type="entry name" value="GTPase_RsgA"/>
    <property type="match status" value="1"/>
</dbReference>
<dbReference type="InterPro" id="IPR030378">
    <property type="entry name" value="G_CP_dom"/>
</dbReference>
<dbReference type="InterPro" id="IPR012340">
    <property type="entry name" value="NA-bd_OB-fold"/>
</dbReference>
<dbReference type="InterPro" id="IPR027417">
    <property type="entry name" value="P-loop_NTPase"/>
</dbReference>
<dbReference type="InterPro" id="IPR004881">
    <property type="entry name" value="Ribosome_biogen_GTPase_RsgA"/>
</dbReference>
<dbReference type="InterPro" id="IPR010914">
    <property type="entry name" value="RsgA_GTPase_dom"/>
</dbReference>
<dbReference type="InterPro" id="IPR031944">
    <property type="entry name" value="RsgA_N"/>
</dbReference>
<dbReference type="NCBIfam" id="TIGR00157">
    <property type="entry name" value="ribosome small subunit-dependent GTPase A"/>
    <property type="match status" value="1"/>
</dbReference>
<dbReference type="PANTHER" id="PTHR32120">
    <property type="entry name" value="SMALL RIBOSOMAL SUBUNIT BIOGENESIS GTPASE RSGA"/>
    <property type="match status" value="1"/>
</dbReference>
<dbReference type="PANTHER" id="PTHR32120:SF11">
    <property type="entry name" value="SMALL RIBOSOMAL SUBUNIT BIOGENESIS GTPASE RSGA 1, MITOCHONDRIAL-RELATED"/>
    <property type="match status" value="1"/>
</dbReference>
<dbReference type="Pfam" id="PF03193">
    <property type="entry name" value="RsgA_GTPase"/>
    <property type="match status" value="1"/>
</dbReference>
<dbReference type="Pfam" id="PF16745">
    <property type="entry name" value="RsgA_N"/>
    <property type="match status" value="1"/>
</dbReference>
<dbReference type="SUPFAM" id="SSF50249">
    <property type="entry name" value="Nucleic acid-binding proteins"/>
    <property type="match status" value="1"/>
</dbReference>
<dbReference type="SUPFAM" id="SSF52540">
    <property type="entry name" value="P-loop containing nucleoside triphosphate hydrolases"/>
    <property type="match status" value="1"/>
</dbReference>
<dbReference type="PROSITE" id="PS50936">
    <property type="entry name" value="ENGC_GTPASE"/>
    <property type="match status" value="1"/>
</dbReference>
<dbReference type="PROSITE" id="PS51721">
    <property type="entry name" value="G_CP"/>
    <property type="match status" value="1"/>
</dbReference>
<sequence length="310" mass="35097">MKGLVIKNTGSWYLVKTEDGRTIECKIKGNFRLKGIRSTNPIAVGDYVQIIINNEGTAFISEIEDRKNYIIRRASNLSKQSHILAANLDQCMLIVTINYPETSTIFIDRFLATAEAYRVPVKLIFNKTDRYNEDDTRYMDALINLYTYIGYPCFKVSALNNIGTDEVKKDLEGKVTLLSGNSGVGKSTLINAILPEQTLKTGEISDYHNKGMHTTTFSEMFPVDGGGYIIDTPGIKGFGTFDMEEEEVGHYFKEIFEYSAHCKYGNCTHRHEPGCAVRDAVEKHLISESRYTSYLNMLEDKEEGKYRAAY</sequence>
<comment type="function">
    <text evidence="1">One of several proteins that assist in the late maturation steps of the functional core of the 30S ribosomal subunit. Helps release RbfA from mature subunits. May play a role in the assembly of ribosomal proteins into the subunit. Circularly permuted GTPase that catalyzes slow GTP hydrolysis, GTPase activity is stimulated by the 30S ribosomal subunit.</text>
</comment>
<comment type="cofactor">
    <cofactor evidence="1">
        <name>Zn(2+)</name>
        <dbReference type="ChEBI" id="CHEBI:29105"/>
    </cofactor>
    <text evidence="1">Binds 1 zinc ion per subunit.</text>
</comment>
<comment type="subunit">
    <text evidence="1">Monomer. Associates with 30S ribosomal subunit, binds 16S rRNA.</text>
</comment>
<comment type="subcellular location">
    <subcellularLocation>
        <location evidence="1">Cytoplasm</location>
    </subcellularLocation>
</comment>
<comment type="similarity">
    <text evidence="1">Belongs to the TRAFAC class YlqF/YawG GTPase family. RsgA subfamily.</text>
</comment>
<reference key="1">
    <citation type="journal article" date="2007" name="PLoS Biol.">
        <title>Evolution of symbiotic bacteria in the distal human intestine.</title>
        <authorList>
            <person name="Xu J."/>
            <person name="Mahowald M.A."/>
            <person name="Ley R.E."/>
            <person name="Lozupone C.A."/>
            <person name="Hamady M."/>
            <person name="Martens E.C."/>
            <person name="Henrissat B."/>
            <person name="Coutinho P.M."/>
            <person name="Minx P."/>
            <person name="Latreille P."/>
            <person name="Cordum H."/>
            <person name="Van Brunt A."/>
            <person name="Kim K."/>
            <person name="Fulton R.S."/>
            <person name="Fulton L.A."/>
            <person name="Clifton S.W."/>
            <person name="Wilson R.K."/>
            <person name="Knight R.D."/>
            <person name="Gordon J.I."/>
        </authorList>
    </citation>
    <scope>NUCLEOTIDE SEQUENCE [LARGE SCALE GENOMIC DNA]</scope>
    <source>
        <strain>ATCC 8482 / DSM 1447 / JCM 5826 / CCUG 4940 / NBRC 14291 / NCTC 11154</strain>
    </source>
</reference>
<keyword id="KW-0963">Cytoplasm</keyword>
<keyword id="KW-0342">GTP-binding</keyword>
<keyword id="KW-0378">Hydrolase</keyword>
<keyword id="KW-0479">Metal-binding</keyword>
<keyword id="KW-0547">Nucleotide-binding</keyword>
<keyword id="KW-0690">Ribosome biogenesis</keyword>
<keyword id="KW-0694">RNA-binding</keyword>
<keyword id="KW-0699">rRNA-binding</keyword>
<keyword id="KW-0862">Zinc</keyword>
<accession>A6L1H7</accession>
<organism>
    <name type="scientific">Phocaeicola vulgatus (strain ATCC 8482 / DSM 1447 / JCM 5826 / CCUG 4940 / NBRC 14291 / NCTC 11154)</name>
    <name type="common">Bacteroides vulgatus</name>
    <dbReference type="NCBI Taxonomy" id="435590"/>
    <lineage>
        <taxon>Bacteria</taxon>
        <taxon>Pseudomonadati</taxon>
        <taxon>Bacteroidota</taxon>
        <taxon>Bacteroidia</taxon>
        <taxon>Bacteroidales</taxon>
        <taxon>Bacteroidaceae</taxon>
        <taxon>Phocaeicola</taxon>
    </lineage>
</organism>
<evidence type="ECO:0000255" key="1">
    <source>
        <dbReference type="HAMAP-Rule" id="MF_01820"/>
    </source>
</evidence>
<evidence type="ECO:0000255" key="2">
    <source>
        <dbReference type="PROSITE-ProRule" id="PRU01058"/>
    </source>
</evidence>
<proteinExistence type="inferred from homology"/>
<name>RSGA_PHOV8</name>
<protein>
    <recommendedName>
        <fullName evidence="1">Small ribosomal subunit biogenesis GTPase RsgA</fullName>
        <ecNumber evidence="1">3.6.1.-</ecNumber>
    </recommendedName>
</protein>